<keyword id="KW-0687">Ribonucleoprotein</keyword>
<keyword id="KW-0689">Ribosomal protein</keyword>
<keyword id="KW-0694">RNA-binding</keyword>
<keyword id="KW-0699">rRNA-binding</keyword>
<keyword id="KW-0820">tRNA-binding</keyword>
<proteinExistence type="inferred from homology"/>
<organism>
    <name type="scientific">Burkholderia cenocepacia (strain ATCC BAA-245 / DSM 16553 / LMG 16656 / NCTC 13227 / J2315 / CF5610)</name>
    <name type="common">Burkholderia cepacia (strain J2315)</name>
    <dbReference type="NCBI Taxonomy" id="216591"/>
    <lineage>
        <taxon>Bacteria</taxon>
        <taxon>Pseudomonadati</taxon>
        <taxon>Pseudomonadota</taxon>
        <taxon>Betaproteobacteria</taxon>
        <taxon>Burkholderiales</taxon>
        <taxon>Burkholderiaceae</taxon>
        <taxon>Burkholderia</taxon>
        <taxon>Burkholderia cepacia complex</taxon>
    </lineage>
</organism>
<comment type="function">
    <text evidence="1">This is one of the proteins that bind and probably mediate the attachment of the 5S RNA into the large ribosomal subunit, where it forms part of the central protuberance. In the 70S ribosome it contacts protein S13 of the 30S subunit (bridge B1b), connecting the 2 subunits; this bridge is implicated in subunit movement. Contacts the P site tRNA; the 5S rRNA and some of its associated proteins might help stabilize positioning of ribosome-bound tRNAs.</text>
</comment>
<comment type="subunit">
    <text evidence="1">Part of the 50S ribosomal subunit; part of the 5S rRNA/L5/L18/L25 subcomplex. Contacts the 5S rRNA and the P site tRNA. Forms a bridge to the 30S subunit in the 70S ribosome.</text>
</comment>
<comment type="similarity">
    <text evidence="1">Belongs to the universal ribosomal protein uL5 family.</text>
</comment>
<name>RL5_BURCJ</name>
<evidence type="ECO:0000255" key="1">
    <source>
        <dbReference type="HAMAP-Rule" id="MF_01333"/>
    </source>
</evidence>
<evidence type="ECO:0000305" key="2"/>
<accession>B4E5D2</accession>
<feature type="chain" id="PRO_1000142365" description="Large ribosomal subunit protein uL5">
    <location>
        <begin position="1"/>
        <end position="179"/>
    </location>
</feature>
<gene>
    <name evidence="1" type="primary">rplE</name>
    <name type="ordered locus">BceJ2315_02490</name>
    <name type="ORF">BCAL0246</name>
</gene>
<sequence>MARFQEFYKEKVVPGLIEKFGYKSVMEVPRITKITLNMGLGEAIADKKIIENAVGDLTKIAGQKPVVTKARKAIAGFKIRQGYPIGAMVTLRGRAMYEFLDRFVTVALPRVRDFRGVSGRAFDGRGNYNIGVKEQIIFPEIDYDKIDALRGLNISITTTAKTDDEAKALLASFKFPFRN</sequence>
<dbReference type="EMBL" id="AM747720">
    <property type="protein sequence ID" value="CAR50557.1"/>
    <property type="molecule type" value="Genomic_DNA"/>
</dbReference>
<dbReference type="RefSeq" id="WP_006482882.1">
    <property type="nucleotide sequence ID" value="NC_011000.1"/>
</dbReference>
<dbReference type="SMR" id="B4E5D2"/>
<dbReference type="GeneID" id="98107148"/>
<dbReference type="KEGG" id="bcj:BCAL0246"/>
<dbReference type="eggNOG" id="COG0094">
    <property type="taxonomic scope" value="Bacteria"/>
</dbReference>
<dbReference type="HOGENOM" id="CLU_061015_2_1_4"/>
<dbReference type="BioCyc" id="BCEN216591:G1G1V-289-MONOMER"/>
<dbReference type="Proteomes" id="UP000001035">
    <property type="component" value="Chromosome 1"/>
</dbReference>
<dbReference type="GO" id="GO:1990904">
    <property type="term" value="C:ribonucleoprotein complex"/>
    <property type="evidence" value="ECO:0007669"/>
    <property type="project" value="UniProtKB-KW"/>
</dbReference>
<dbReference type="GO" id="GO:0005840">
    <property type="term" value="C:ribosome"/>
    <property type="evidence" value="ECO:0007669"/>
    <property type="project" value="UniProtKB-KW"/>
</dbReference>
<dbReference type="GO" id="GO:0019843">
    <property type="term" value="F:rRNA binding"/>
    <property type="evidence" value="ECO:0007669"/>
    <property type="project" value="UniProtKB-UniRule"/>
</dbReference>
<dbReference type="GO" id="GO:0003735">
    <property type="term" value="F:structural constituent of ribosome"/>
    <property type="evidence" value="ECO:0007669"/>
    <property type="project" value="InterPro"/>
</dbReference>
<dbReference type="GO" id="GO:0000049">
    <property type="term" value="F:tRNA binding"/>
    <property type="evidence" value="ECO:0007669"/>
    <property type="project" value="UniProtKB-UniRule"/>
</dbReference>
<dbReference type="GO" id="GO:0006412">
    <property type="term" value="P:translation"/>
    <property type="evidence" value="ECO:0007669"/>
    <property type="project" value="UniProtKB-UniRule"/>
</dbReference>
<dbReference type="FunFam" id="3.30.1440.10:FF:000001">
    <property type="entry name" value="50S ribosomal protein L5"/>
    <property type="match status" value="1"/>
</dbReference>
<dbReference type="Gene3D" id="3.30.1440.10">
    <property type="match status" value="1"/>
</dbReference>
<dbReference type="HAMAP" id="MF_01333_B">
    <property type="entry name" value="Ribosomal_uL5_B"/>
    <property type="match status" value="1"/>
</dbReference>
<dbReference type="InterPro" id="IPR002132">
    <property type="entry name" value="Ribosomal_uL5"/>
</dbReference>
<dbReference type="InterPro" id="IPR020930">
    <property type="entry name" value="Ribosomal_uL5_bac-type"/>
</dbReference>
<dbReference type="InterPro" id="IPR031309">
    <property type="entry name" value="Ribosomal_uL5_C"/>
</dbReference>
<dbReference type="InterPro" id="IPR020929">
    <property type="entry name" value="Ribosomal_uL5_CS"/>
</dbReference>
<dbReference type="InterPro" id="IPR022803">
    <property type="entry name" value="Ribosomal_uL5_dom_sf"/>
</dbReference>
<dbReference type="InterPro" id="IPR031310">
    <property type="entry name" value="Ribosomal_uL5_N"/>
</dbReference>
<dbReference type="NCBIfam" id="NF000585">
    <property type="entry name" value="PRK00010.1"/>
    <property type="match status" value="1"/>
</dbReference>
<dbReference type="PANTHER" id="PTHR11994">
    <property type="entry name" value="60S RIBOSOMAL PROTEIN L11-RELATED"/>
    <property type="match status" value="1"/>
</dbReference>
<dbReference type="Pfam" id="PF00281">
    <property type="entry name" value="Ribosomal_L5"/>
    <property type="match status" value="1"/>
</dbReference>
<dbReference type="Pfam" id="PF00673">
    <property type="entry name" value="Ribosomal_L5_C"/>
    <property type="match status" value="1"/>
</dbReference>
<dbReference type="PIRSF" id="PIRSF002161">
    <property type="entry name" value="Ribosomal_L5"/>
    <property type="match status" value="1"/>
</dbReference>
<dbReference type="SUPFAM" id="SSF55282">
    <property type="entry name" value="RL5-like"/>
    <property type="match status" value="1"/>
</dbReference>
<dbReference type="PROSITE" id="PS00358">
    <property type="entry name" value="RIBOSOMAL_L5"/>
    <property type="match status" value="1"/>
</dbReference>
<reference key="1">
    <citation type="journal article" date="2009" name="J. Bacteriol.">
        <title>The genome of Burkholderia cenocepacia J2315, an epidemic pathogen of cystic fibrosis patients.</title>
        <authorList>
            <person name="Holden M.T."/>
            <person name="Seth-Smith H.M."/>
            <person name="Crossman L.C."/>
            <person name="Sebaihia M."/>
            <person name="Bentley S.D."/>
            <person name="Cerdeno-Tarraga A.M."/>
            <person name="Thomson N.R."/>
            <person name="Bason N."/>
            <person name="Quail M.A."/>
            <person name="Sharp S."/>
            <person name="Cherevach I."/>
            <person name="Churcher C."/>
            <person name="Goodhead I."/>
            <person name="Hauser H."/>
            <person name="Holroyd N."/>
            <person name="Mungall K."/>
            <person name="Scott P."/>
            <person name="Walker D."/>
            <person name="White B."/>
            <person name="Rose H."/>
            <person name="Iversen P."/>
            <person name="Mil-Homens D."/>
            <person name="Rocha E.P."/>
            <person name="Fialho A.M."/>
            <person name="Baldwin A."/>
            <person name="Dowson C."/>
            <person name="Barrell B.G."/>
            <person name="Govan J.R."/>
            <person name="Vandamme P."/>
            <person name="Hart C.A."/>
            <person name="Mahenthiralingam E."/>
            <person name="Parkhill J."/>
        </authorList>
    </citation>
    <scope>NUCLEOTIDE SEQUENCE [LARGE SCALE GENOMIC DNA]</scope>
    <source>
        <strain>ATCC BAA-245 / DSM 16553 / LMG 16656 / NCTC 13227 / J2315 / CF5610</strain>
    </source>
</reference>
<protein>
    <recommendedName>
        <fullName evidence="1">Large ribosomal subunit protein uL5</fullName>
    </recommendedName>
    <alternativeName>
        <fullName evidence="2">50S ribosomal protein L5</fullName>
    </alternativeName>
</protein>